<gene>
    <name type="primary">BTN1</name>
    <name type="ordered locus">CAALFM_C105120WA</name>
    <name type="ORF">CaO19.11541</name>
    <name type="ORF">CaO19.4059</name>
</gene>
<reference key="1">
    <citation type="journal article" date="2004" name="Proc. Natl. Acad. Sci. U.S.A.">
        <title>The diploid genome sequence of Candida albicans.</title>
        <authorList>
            <person name="Jones T."/>
            <person name="Federspiel N.A."/>
            <person name="Chibana H."/>
            <person name="Dungan J."/>
            <person name="Kalman S."/>
            <person name="Magee B.B."/>
            <person name="Newport G."/>
            <person name="Thorstenson Y.R."/>
            <person name="Agabian N."/>
            <person name="Magee P.T."/>
            <person name="Davis R.W."/>
            <person name="Scherer S."/>
        </authorList>
    </citation>
    <scope>NUCLEOTIDE SEQUENCE [LARGE SCALE GENOMIC DNA]</scope>
    <source>
        <strain>SC5314 / ATCC MYA-2876</strain>
    </source>
</reference>
<reference key="2">
    <citation type="journal article" date="2007" name="Genome Biol.">
        <title>Assembly of the Candida albicans genome into sixteen supercontigs aligned on the eight chromosomes.</title>
        <authorList>
            <person name="van het Hoog M."/>
            <person name="Rast T.J."/>
            <person name="Martchenko M."/>
            <person name="Grindle S."/>
            <person name="Dignard D."/>
            <person name="Hogues H."/>
            <person name="Cuomo C."/>
            <person name="Berriman M."/>
            <person name="Scherer S."/>
            <person name="Magee B.B."/>
            <person name="Whiteway M."/>
            <person name="Chibana H."/>
            <person name="Nantel A."/>
            <person name="Magee P.T."/>
        </authorList>
    </citation>
    <scope>GENOME REANNOTATION</scope>
    <source>
        <strain>SC5314 / ATCC MYA-2876</strain>
    </source>
</reference>
<reference key="3">
    <citation type="journal article" date="2013" name="Genome Biol.">
        <title>Assembly of a phased diploid Candida albicans genome facilitates allele-specific measurements and provides a simple model for repeat and indel structure.</title>
        <authorList>
            <person name="Muzzey D."/>
            <person name="Schwartz K."/>
            <person name="Weissman J.S."/>
            <person name="Sherlock G."/>
        </authorList>
    </citation>
    <scope>NUCLEOTIDE SEQUENCE [LARGE SCALE GENOMIC DNA]</scope>
    <scope>GENOME REANNOTATION</scope>
    <source>
        <strain>SC5314 / ATCC MYA-2876</strain>
    </source>
</reference>
<dbReference type="EMBL" id="CP017623">
    <property type="protein sequence ID" value="AOW26183.1"/>
    <property type="molecule type" value="Genomic_DNA"/>
</dbReference>
<dbReference type="RefSeq" id="XP_710728.2">
    <property type="nucleotide sequence ID" value="XM_705636.2"/>
</dbReference>
<dbReference type="SMR" id="Q59LX9"/>
<dbReference type="FunCoup" id="Q59LX9">
    <property type="interactions" value="114"/>
</dbReference>
<dbReference type="STRING" id="237561.Q59LX9"/>
<dbReference type="TCDB" id="2.A.57.5.3">
    <property type="family name" value="the equilibrative nucleoside transporter (ent) family"/>
</dbReference>
<dbReference type="EnsemblFungi" id="C1_05120W_A-T">
    <property type="protein sequence ID" value="C1_05120W_A-T-p1"/>
    <property type="gene ID" value="C1_05120W_A"/>
</dbReference>
<dbReference type="GeneID" id="3647667"/>
<dbReference type="KEGG" id="cal:CAALFM_C105120WA"/>
<dbReference type="CGD" id="CAL0000190783">
    <property type="gene designation" value="orf19.11541"/>
</dbReference>
<dbReference type="VEuPathDB" id="FungiDB:C1_05120W_A"/>
<dbReference type="eggNOG" id="KOG3880">
    <property type="taxonomic scope" value="Eukaryota"/>
</dbReference>
<dbReference type="HOGENOM" id="CLU_029663_1_2_1"/>
<dbReference type="InParanoid" id="Q59LX9"/>
<dbReference type="OrthoDB" id="5965864at2759"/>
<dbReference type="PRO" id="PR:Q59LX9"/>
<dbReference type="Proteomes" id="UP000000559">
    <property type="component" value="Chromosome 1"/>
</dbReference>
<dbReference type="GO" id="GO:0000324">
    <property type="term" value="C:fungal-type vacuole"/>
    <property type="evidence" value="ECO:0007669"/>
    <property type="project" value="EnsemblFungi"/>
</dbReference>
<dbReference type="GO" id="GO:0005774">
    <property type="term" value="C:vacuolar membrane"/>
    <property type="evidence" value="ECO:0007669"/>
    <property type="project" value="UniProtKB-SubCell"/>
</dbReference>
<dbReference type="GO" id="GO:0005773">
    <property type="term" value="C:vacuole"/>
    <property type="evidence" value="ECO:0000318"/>
    <property type="project" value="GO_Central"/>
</dbReference>
<dbReference type="GO" id="GO:1903826">
    <property type="term" value="P:L-arginine transmembrane transport"/>
    <property type="evidence" value="ECO:0007669"/>
    <property type="project" value="EnsemblFungi"/>
</dbReference>
<dbReference type="GO" id="GO:0015819">
    <property type="term" value="P:lysine transport"/>
    <property type="evidence" value="ECO:0007669"/>
    <property type="project" value="EnsemblFungi"/>
</dbReference>
<dbReference type="GO" id="GO:0051453">
    <property type="term" value="P:regulation of intracellular pH"/>
    <property type="evidence" value="ECO:0000318"/>
    <property type="project" value="GO_Central"/>
</dbReference>
<dbReference type="Gene3D" id="1.20.1250.20">
    <property type="entry name" value="MFS general substrate transporter like domains"/>
    <property type="match status" value="1"/>
</dbReference>
<dbReference type="InterPro" id="IPR003492">
    <property type="entry name" value="Battenin_disease_Cln3"/>
</dbReference>
<dbReference type="InterPro" id="IPR018460">
    <property type="entry name" value="Battenin_disease_Cln3_subgr"/>
</dbReference>
<dbReference type="InterPro" id="IPR036259">
    <property type="entry name" value="MFS_trans_sf"/>
</dbReference>
<dbReference type="PANTHER" id="PTHR10981">
    <property type="entry name" value="BATTENIN"/>
    <property type="match status" value="1"/>
</dbReference>
<dbReference type="PANTHER" id="PTHR10981:SF0">
    <property type="entry name" value="BATTENIN"/>
    <property type="match status" value="1"/>
</dbReference>
<dbReference type="Pfam" id="PF02487">
    <property type="entry name" value="CLN3"/>
    <property type="match status" value="1"/>
</dbReference>
<dbReference type="PIRSF" id="PIRSF015974">
    <property type="entry name" value="CLN3_BTN1"/>
    <property type="match status" value="1"/>
</dbReference>
<dbReference type="PRINTS" id="PR01315">
    <property type="entry name" value="BATTENIN"/>
</dbReference>
<dbReference type="SUPFAM" id="SSF103473">
    <property type="entry name" value="MFS general substrate transporter"/>
    <property type="match status" value="1"/>
</dbReference>
<protein>
    <recommendedName>
        <fullName>Protein BTN1</fullName>
    </recommendedName>
</protein>
<keyword id="KW-0029">Amino-acid transport</keyword>
<keyword id="KW-0472">Membrane</keyword>
<keyword id="KW-1185">Reference proteome</keyword>
<keyword id="KW-0732">Signal</keyword>
<keyword id="KW-0812">Transmembrane</keyword>
<keyword id="KW-1133">Transmembrane helix</keyword>
<keyword id="KW-0813">Transport</keyword>
<keyword id="KW-0926">Vacuole</keyword>
<name>BTN1_CANAL</name>
<proteinExistence type="inferred from homology"/>
<feature type="signal peptide" evidence="2">
    <location>
        <begin position="1"/>
        <end position="32"/>
    </location>
</feature>
<feature type="chain" id="PRO_0000256257" description="Protein BTN1">
    <location>
        <begin position="33"/>
        <end position="426"/>
    </location>
</feature>
<feature type="transmembrane region" description="Helical" evidence="2">
    <location>
        <begin position="44"/>
        <end position="64"/>
    </location>
</feature>
<feature type="transmembrane region" description="Helical" evidence="2">
    <location>
        <begin position="67"/>
        <end position="87"/>
    </location>
</feature>
<feature type="transmembrane region" description="Helical" evidence="2">
    <location>
        <begin position="99"/>
        <end position="119"/>
    </location>
</feature>
<feature type="transmembrane region" description="Helical" evidence="2">
    <location>
        <begin position="129"/>
        <end position="149"/>
    </location>
</feature>
<feature type="transmembrane region" description="Helical" evidence="2">
    <location>
        <begin position="154"/>
        <end position="174"/>
    </location>
</feature>
<feature type="transmembrane region" description="Helical" evidence="2">
    <location>
        <begin position="243"/>
        <end position="263"/>
    </location>
</feature>
<feature type="transmembrane region" description="Helical" evidence="2">
    <location>
        <begin position="290"/>
        <end position="310"/>
    </location>
</feature>
<feature type="transmembrane region" description="Helical" evidence="2">
    <location>
        <begin position="318"/>
        <end position="338"/>
    </location>
</feature>
<feature type="transmembrane region" description="Helical" evidence="2">
    <location>
        <begin position="340"/>
        <end position="360"/>
    </location>
</feature>
<feature type="transmembrane region" description="Helical" evidence="2">
    <location>
        <begin position="384"/>
        <end position="404"/>
    </location>
</feature>
<comment type="function">
    <text evidence="1">Involved in vacuolar transport and vacuole pH homeostasis. Also required for cytokinesis (By similarity).</text>
</comment>
<comment type="subcellular location">
    <subcellularLocation>
        <location evidence="1">Vacuole membrane</location>
        <topology evidence="1">Multi-pass membrane protein</topology>
    </subcellularLocation>
</comment>
<comment type="similarity">
    <text evidence="3">Belongs to the battenin family.</text>
</comment>
<evidence type="ECO:0000250" key="1"/>
<evidence type="ECO:0000255" key="2"/>
<evidence type="ECO:0000305" key="3"/>
<sequence length="426" mass="48162">MFIISETQRTFASFFIFGLLNNILYVIILSAAIDLVGPSTPKAIVLLADIIPSFSFKVAAPFFIHAVPYIIRLWTLVALSATGMVLISLSPTNVISWKILGITLASLSSGLGEVSFLQLTHYYEENSAIGGFSSGTGGAGLFGSFLFMVLTNVMGFPVWVVLLICAVFPSGFIITYFNLLPLPMHEYQVILQQQQEREEEQEEEEYQQQLQDEARSQNIESIREVKYSVNYISKHVQNTIHKITPLILPYMLPLTTVYISEYVINQGISPTLLFPLKEVPRWLISSYRDIYVVYGFLYQLGVFISRSSVTMGIRIKRLYLLSVLQFINVMITLYQSIYDLPFHSIWWLFLLIFYEGLLGGASYVNTFKSVSEQVSRTKREFSMGCVSISDSLGIVTAGCINWWLELKLCHLQVARGRDWCLKGGSL</sequence>
<accession>Q59LX9</accession>
<accession>A0A1D8PDG8</accession>
<accession>Q59LY9</accession>
<organism>
    <name type="scientific">Candida albicans (strain SC5314 / ATCC MYA-2876)</name>
    <name type="common">Yeast</name>
    <dbReference type="NCBI Taxonomy" id="237561"/>
    <lineage>
        <taxon>Eukaryota</taxon>
        <taxon>Fungi</taxon>
        <taxon>Dikarya</taxon>
        <taxon>Ascomycota</taxon>
        <taxon>Saccharomycotina</taxon>
        <taxon>Pichiomycetes</taxon>
        <taxon>Debaryomycetaceae</taxon>
        <taxon>Candida/Lodderomyces clade</taxon>
        <taxon>Candida</taxon>
    </lineage>
</organism>